<proteinExistence type="predicted"/>
<name>Y701_SYNY3</name>
<organism>
    <name type="scientific">Synechocystis sp. (strain ATCC 27184 / PCC 6803 / Kazusa)</name>
    <dbReference type="NCBI Taxonomy" id="1111708"/>
    <lineage>
        <taxon>Bacteria</taxon>
        <taxon>Bacillati</taxon>
        <taxon>Cyanobacteriota</taxon>
        <taxon>Cyanophyceae</taxon>
        <taxon>Synechococcales</taxon>
        <taxon>Merismopediaceae</taxon>
        <taxon>Synechocystis</taxon>
    </lineage>
</organism>
<evidence type="ECO:0000255" key="1">
    <source>
        <dbReference type="PROSITE-ProRule" id="PRU00254"/>
    </source>
</evidence>
<dbReference type="EMBL" id="BA000022">
    <property type="protein sequence ID" value="BAA10733.1"/>
    <property type="molecule type" value="Genomic_DNA"/>
</dbReference>
<dbReference type="PIR" id="S77041">
    <property type="entry name" value="S77041"/>
</dbReference>
<dbReference type="SMR" id="Q55963"/>
<dbReference type="FunCoup" id="Q55963">
    <property type="interactions" value="12"/>
</dbReference>
<dbReference type="IntAct" id="Q55963">
    <property type="interactions" value="1"/>
</dbReference>
<dbReference type="STRING" id="1148.gene:10500237"/>
<dbReference type="PaxDb" id="1148-1006583"/>
<dbReference type="EnsemblBacteria" id="BAA10733">
    <property type="protein sequence ID" value="BAA10733"/>
    <property type="gene ID" value="BAA10733"/>
</dbReference>
<dbReference type="KEGG" id="syn:slr0701"/>
<dbReference type="eggNOG" id="COG0789">
    <property type="taxonomic scope" value="Bacteria"/>
</dbReference>
<dbReference type="InParanoid" id="Q55963"/>
<dbReference type="PhylomeDB" id="Q55963"/>
<dbReference type="Proteomes" id="UP000001425">
    <property type="component" value="Chromosome"/>
</dbReference>
<dbReference type="GO" id="GO:0003677">
    <property type="term" value="F:DNA binding"/>
    <property type="evidence" value="ECO:0007669"/>
    <property type="project" value="UniProtKB-KW"/>
</dbReference>
<dbReference type="GO" id="GO:0003700">
    <property type="term" value="F:DNA-binding transcription factor activity"/>
    <property type="evidence" value="ECO:0000318"/>
    <property type="project" value="GO_Central"/>
</dbReference>
<dbReference type="GO" id="GO:0045893">
    <property type="term" value="P:positive regulation of DNA-templated transcription"/>
    <property type="evidence" value="ECO:0000318"/>
    <property type="project" value="GO_Central"/>
</dbReference>
<dbReference type="CDD" id="cd04770">
    <property type="entry name" value="HTH_HMRTR"/>
    <property type="match status" value="1"/>
</dbReference>
<dbReference type="Gene3D" id="1.10.1660.10">
    <property type="match status" value="1"/>
</dbReference>
<dbReference type="InterPro" id="IPR009061">
    <property type="entry name" value="DNA-bd_dom_put_sf"/>
</dbReference>
<dbReference type="InterPro" id="IPR000551">
    <property type="entry name" value="MerR-type_HTH_dom"/>
</dbReference>
<dbReference type="InterPro" id="IPR047057">
    <property type="entry name" value="MerR_fam"/>
</dbReference>
<dbReference type="PANTHER" id="PTHR30204:SF94">
    <property type="entry name" value="HEAVY METAL-DEPENDENT TRANSCRIPTIONAL REGULATOR HI_0293-RELATED"/>
    <property type="match status" value="1"/>
</dbReference>
<dbReference type="PANTHER" id="PTHR30204">
    <property type="entry name" value="REDOX-CYCLING DRUG-SENSING TRANSCRIPTIONAL ACTIVATOR SOXR"/>
    <property type="match status" value="1"/>
</dbReference>
<dbReference type="Pfam" id="PF13411">
    <property type="entry name" value="MerR_1"/>
    <property type="match status" value="1"/>
</dbReference>
<dbReference type="PRINTS" id="PR00040">
    <property type="entry name" value="HTHMERR"/>
</dbReference>
<dbReference type="SMART" id="SM00422">
    <property type="entry name" value="HTH_MERR"/>
    <property type="match status" value="1"/>
</dbReference>
<dbReference type="SUPFAM" id="SSF46955">
    <property type="entry name" value="Putative DNA-binding domain"/>
    <property type="match status" value="1"/>
</dbReference>
<dbReference type="PROSITE" id="PS50937">
    <property type="entry name" value="HTH_MERR_2"/>
    <property type="match status" value="1"/>
</dbReference>
<sequence>MSIMLTVSEVARKLGLNPQTLYFYERIGVVDHPQRNQSGYRVYQEKDLAILSFIRHAKDLGFSLEEIADILHLQSQQSLTCDEIYHKLTSKILQLESGIKEMEKMKDDLSKILSLCCQRISNGGKHGNCCLLNEQLT</sequence>
<accession>Q55963</accession>
<protein>
    <recommendedName>
        <fullName>Uncharacterized HTH-type transcriptional regulator slr0701</fullName>
    </recommendedName>
</protein>
<feature type="chain" id="PRO_0000098174" description="Uncharacterized HTH-type transcriptional regulator slr0701">
    <location>
        <begin position="1"/>
        <end position="137"/>
    </location>
</feature>
<feature type="domain" description="HTH merR-type" evidence="1">
    <location>
        <begin position="4"/>
        <end position="73"/>
    </location>
</feature>
<feature type="DNA-binding region" description="H-T-H motif" evidence="1">
    <location>
        <begin position="8"/>
        <end position="27"/>
    </location>
</feature>
<gene>
    <name type="ordered locus">slr0701</name>
</gene>
<reference key="1">
    <citation type="journal article" date="1995" name="DNA Res.">
        <title>Sequence analysis of the genome of the unicellular cyanobacterium Synechocystis sp. strain PCC6803. I. Sequence features in the 1 Mb region from map positions 64% to 92% of the genome.</title>
        <authorList>
            <person name="Kaneko T."/>
            <person name="Tanaka A."/>
            <person name="Sato S."/>
            <person name="Kotani H."/>
            <person name="Sazuka T."/>
            <person name="Miyajima N."/>
            <person name="Sugiura M."/>
            <person name="Tabata S."/>
        </authorList>
    </citation>
    <scope>NUCLEOTIDE SEQUENCE [LARGE SCALE GENOMIC DNA]</scope>
    <source>
        <strain>ATCC 27184 / PCC 6803 / N-1</strain>
    </source>
</reference>
<reference key="2">
    <citation type="journal article" date="1996" name="DNA Res.">
        <title>Sequence analysis of the genome of the unicellular cyanobacterium Synechocystis sp. strain PCC6803. II. Sequence determination of the entire genome and assignment of potential protein-coding regions.</title>
        <authorList>
            <person name="Kaneko T."/>
            <person name="Sato S."/>
            <person name="Kotani H."/>
            <person name="Tanaka A."/>
            <person name="Asamizu E."/>
            <person name="Nakamura Y."/>
            <person name="Miyajima N."/>
            <person name="Hirosawa M."/>
            <person name="Sugiura M."/>
            <person name="Sasamoto S."/>
            <person name="Kimura T."/>
            <person name="Hosouchi T."/>
            <person name="Matsuno A."/>
            <person name="Muraki A."/>
            <person name="Nakazaki N."/>
            <person name="Naruo K."/>
            <person name="Okumura S."/>
            <person name="Shimpo S."/>
            <person name="Takeuchi C."/>
            <person name="Wada T."/>
            <person name="Watanabe A."/>
            <person name="Yamada M."/>
            <person name="Yasuda M."/>
            <person name="Tabata S."/>
        </authorList>
    </citation>
    <scope>NUCLEOTIDE SEQUENCE [LARGE SCALE GENOMIC DNA]</scope>
    <source>
        <strain>ATCC 27184 / PCC 6803 / Kazusa</strain>
    </source>
</reference>
<keyword id="KW-0238">DNA-binding</keyword>
<keyword id="KW-1185">Reference proteome</keyword>
<keyword id="KW-0804">Transcription</keyword>
<keyword id="KW-0805">Transcription regulation</keyword>